<evidence type="ECO:0000255" key="1">
    <source>
        <dbReference type="HAMAP-Rule" id="MF_00402"/>
    </source>
</evidence>
<evidence type="ECO:0000305" key="2"/>
<name>RL19_BACC4</name>
<dbReference type="EMBL" id="CP001176">
    <property type="protein sequence ID" value="ACK59821.1"/>
    <property type="molecule type" value="Genomic_DNA"/>
</dbReference>
<dbReference type="RefSeq" id="WP_001186516.1">
    <property type="nucleotide sequence ID" value="NZ_VEHB01000002.1"/>
</dbReference>
<dbReference type="SMR" id="B7HDW3"/>
<dbReference type="GeneID" id="93007272"/>
<dbReference type="KEGG" id="bcb:BCB4264_A3938"/>
<dbReference type="HOGENOM" id="CLU_103507_2_1_9"/>
<dbReference type="Proteomes" id="UP000007096">
    <property type="component" value="Chromosome"/>
</dbReference>
<dbReference type="GO" id="GO:0022625">
    <property type="term" value="C:cytosolic large ribosomal subunit"/>
    <property type="evidence" value="ECO:0007669"/>
    <property type="project" value="TreeGrafter"/>
</dbReference>
<dbReference type="GO" id="GO:0003735">
    <property type="term" value="F:structural constituent of ribosome"/>
    <property type="evidence" value="ECO:0007669"/>
    <property type="project" value="InterPro"/>
</dbReference>
<dbReference type="GO" id="GO:0006412">
    <property type="term" value="P:translation"/>
    <property type="evidence" value="ECO:0007669"/>
    <property type="project" value="UniProtKB-UniRule"/>
</dbReference>
<dbReference type="FunFam" id="2.30.30.790:FF:000001">
    <property type="entry name" value="50S ribosomal protein L19"/>
    <property type="match status" value="1"/>
</dbReference>
<dbReference type="Gene3D" id="2.30.30.790">
    <property type="match status" value="1"/>
</dbReference>
<dbReference type="HAMAP" id="MF_00402">
    <property type="entry name" value="Ribosomal_bL19"/>
    <property type="match status" value="1"/>
</dbReference>
<dbReference type="InterPro" id="IPR001857">
    <property type="entry name" value="Ribosomal_bL19"/>
</dbReference>
<dbReference type="InterPro" id="IPR018257">
    <property type="entry name" value="Ribosomal_bL19_CS"/>
</dbReference>
<dbReference type="InterPro" id="IPR038657">
    <property type="entry name" value="Ribosomal_bL19_sf"/>
</dbReference>
<dbReference type="InterPro" id="IPR008991">
    <property type="entry name" value="Translation_prot_SH3-like_sf"/>
</dbReference>
<dbReference type="NCBIfam" id="TIGR01024">
    <property type="entry name" value="rplS_bact"/>
    <property type="match status" value="1"/>
</dbReference>
<dbReference type="PANTHER" id="PTHR15680:SF9">
    <property type="entry name" value="LARGE RIBOSOMAL SUBUNIT PROTEIN BL19M"/>
    <property type="match status" value="1"/>
</dbReference>
<dbReference type="PANTHER" id="PTHR15680">
    <property type="entry name" value="RIBOSOMAL PROTEIN L19"/>
    <property type="match status" value="1"/>
</dbReference>
<dbReference type="Pfam" id="PF01245">
    <property type="entry name" value="Ribosomal_L19"/>
    <property type="match status" value="1"/>
</dbReference>
<dbReference type="PIRSF" id="PIRSF002191">
    <property type="entry name" value="Ribosomal_L19"/>
    <property type="match status" value="1"/>
</dbReference>
<dbReference type="PRINTS" id="PR00061">
    <property type="entry name" value="RIBOSOMALL19"/>
</dbReference>
<dbReference type="SUPFAM" id="SSF50104">
    <property type="entry name" value="Translation proteins SH3-like domain"/>
    <property type="match status" value="1"/>
</dbReference>
<dbReference type="PROSITE" id="PS01015">
    <property type="entry name" value="RIBOSOMAL_L19"/>
    <property type="match status" value="1"/>
</dbReference>
<keyword id="KW-0687">Ribonucleoprotein</keyword>
<keyword id="KW-0689">Ribosomal protein</keyword>
<comment type="function">
    <text evidence="1">This protein is located at the 30S-50S ribosomal subunit interface and may play a role in the structure and function of the aminoacyl-tRNA binding site.</text>
</comment>
<comment type="similarity">
    <text evidence="1">Belongs to the bacterial ribosomal protein bL19 family.</text>
</comment>
<proteinExistence type="inferred from homology"/>
<gene>
    <name evidence="1" type="primary">rplS</name>
    <name type="ordered locus">BCB4264_A3938</name>
</gene>
<organism>
    <name type="scientific">Bacillus cereus (strain B4264)</name>
    <dbReference type="NCBI Taxonomy" id="405532"/>
    <lineage>
        <taxon>Bacteria</taxon>
        <taxon>Bacillati</taxon>
        <taxon>Bacillota</taxon>
        <taxon>Bacilli</taxon>
        <taxon>Bacillales</taxon>
        <taxon>Bacillaceae</taxon>
        <taxon>Bacillus</taxon>
        <taxon>Bacillus cereus group</taxon>
    </lineage>
</organism>
<sequence>MQQLIAEITKGQLKTDLPSFRPGDTLRVHVKVVEGTRERIQLFEGVVIKRRGGGISETFTVRKISYGVGVERTFPVHTPRIAKIEVLRRGKVRRAKLYYLRNLRGKKARIKEIR</sequence>
<accession>B7HDW3</accession>
<feature type="chain" id="PRO_1000193791" description="Large ribosomal subunit protein bL19">
    <location>
        <begin position="1"/>
        <end position="114"/>
    </location>
</feature>
<reference key="1">
    <citation type="submission" date="2008-10" db="EMBL/GenBank/DDBJ databases">
        <title>Genome sequence of Bacillus cereus B4264.</title>
        <authorList>
            <person name="Dodson R.J."/>
            <person name="Durkin A.S."/>
            <person name="Rosovitz M.J."/>
            <person name="Rasko D.A."/>
            <person name="Hoffmaster A."/>
            <person name="Ravel J."/>
            <person name="Sutton G."/>
        </authorList>
    </citation>
    <scope>NUCLEOTIDE SEQUENCE [LARGE SCALE GENOMIC DNA]</scope>
    <source>
        <strain>B4264</strain>
    </source>
</reference>
<protein>
    <recommendedName>
        <fullName evidence="1">Large ribosomal subunit protein bL19</fullName>
    </recommendedName>
    <alternativeName>
        <fullName evidence="2">50S ribosomal protein L19</fullName>
    </alternativeName>
</protein>